<evidence type="ECO:0000255" key="1"/>
<evidence type="ECO:0000256" key="2">
    <source>
        <dbReference type="SAM" id="MobiDB-lite"/>
    </source>
</evidence>
<evidence type="ECO:0000269" key="3">
    <source>
    </source>
</evidence>
<evidence type="ECO:0000269" key="4">
    <source>
    </source>
</evidence>
<evidence type="ECO:0000269" key="5">
    <source>
    </source>
</evidence>
<evidence type="ECO:0000269" key="6">
    <source>
    </source>
</evidence>
<evidence type="ECO:0000269" key="7">
    <source>
    </source>
</evidence>
<evidence type="ECO:0000269" key="8">
    <source>
    </source>
</evidence>
<evidence type="ECO:0000269" key="9">
    <source>
    </source>
</evidence>
<evidence type="ECO:0000269" key="10">
    <source>
    </source>
</evidence>
<evidence type="ECO:0000269" key="11">
    <source>
    </source>
</evidence>
<evidence type="ECO:0000269" key="12">
    <source>
    </source>
</evidence>
<evidence type="ECO:0000269" key="13">
    <source>
    </source>
</evidence>
<evidence type="ECO:0000305" key="14"/>
<evidence type="ECO:0000312" key="15">
    <source>
        <dbReference type="EMBL" id="AAC47411.1"/>
    </source>
</evidence>
<evidence type="ECO:0000312" key="16">
    <source>
        <dbReference type="Proteomes" id="UP000001940"/>
    </source>
</evidence>
<evidence type="ECO:0000312" key="17">
    <source>
        <dbReference type="WormBase" id="C25G4.5"/>
    </source>
</evidence>
<proteinExistence type="evidence at protein level"/>
<sequence length="1263" mass="142596">MDVPSSSNVTGRRKRQVLDDDEDDGFRSTPLRKVRGTKKIRPADVVPETIMTKIGAHIDDIVNKKKVGELNCFEYKSPLEIHTIEDMIKAKASIQEMAVVLEGAQCIIGYRVDRLHHDVRQIDSALSSGTVMRDSNGEEIHLTLESRKAKKKMAVVDGMNGMLDFLNNMDDALTTTELDADNDKNWKEDEENIAGEPRIDFKANSKDVDAFLQRDIFPEKLIYALSIKRATDLRADLLSDVSNYISADDTAHDLKDANIDWLRANPTFQKATKGSVCNSSNSFHSLNYYGIHSPDGRTLMLHNRIADKNADDRFFTSDVSVSLVKNTRALLTNSLDKKPRILDNYLMLEVKDRPVIGRYKIMSKDVKKSTLPLAESSREKDLANLTFAEMNHRPSNLDMTVAGASDMSMLPGNQGLPLAQGENDETIALDRLTPPLQSSVSQKASDEYVLPPLEANDLDEHLIGKLPIEPNEMDQTLANMFDKKLEVFNTSDTLESKVWKNGIRAEEWGEDDEAIMKNDTKHPRQAGIEGWIKATDAWTNYDVVKMNVNREARSQLDENAIDEQESYRNMVPEIGKNLFLVKSDDYMNNYPGDRPADFTVNDEVSDVMKMWSGEDSTAEDDVPLEQIQQEIREQVQQQDVDMEPIEEMDYDAGGAAFDVDFDDRLAAPVEVEEMEGDNNRNDGRVADILFNEQMDETEVEERNEQDVQRELEDIALAADEVAELMTSAPPPQLVGPSAEMREEIQNIGKNDNAHWVPPVVGDQERQAAVTAQRKRREKKAKSRKATVEDFVHYFRDIPDDEIEREITAAKCSKIADEKSTFLSEQQLYLPTLGIENKPHVAFEMGLLGNSGMFFKKSYGKIRLERVKNQKAEQDLFIDEARGNKDSDCLNWLLSFSGFRCMENPEPITGSDSDENLRTAVEQPFDDDFANDYYDEDRYDPNYEQQLAAAQMGPDMQRKLALTASHINQMFPNIHSKRYGGEYGDSDDEFDDSFDRQSIQAKNLDAAKHKKCLAEILKTDSLSMPSIQYVLEQLTSNQTLRMNNTTIRAADDRNETGRPATPTMEADKTLTSVFDYRSPNKSNHDVNETMKALTEMPDYQAADERPNNQPTTSTYGTANTENRKVHINGCHTLLSLALSMPSRMGETVRPSSIVSFLLHIANENNLQIVQDRSKRSWMSDFIVLNSSESLPRGLKMGRIEDQDEFWKRTQDPDAIEGTASDANNVFSNLMRRPKAVPVRKGRGAGGQPTTSDLGAIVEEEEMEE</sequence>
<keyword id="KW-0131">Cell cycle</keyword>
<keyword id="KW-0132">Cell division</keyword>
<keyword id="KW-0158">Chromosome</keyword>
<keyword id="KW-0175">Coiled coil</keyword>
<keyword id="KW-0226">DNA condensation</keyword>
<keyword id="KW-0469">Meiosis</keyword>
<keyword id="KW-0498">Mitosis</keyword>
<keyword id="KW-0539">Nucleus</keyword>
<keyword id="KW-1185">Reference proteome</keyword>
<feature type="chain" id="PRO_0000440174" description="Condensin complex subunit dpy-26">
    <location>
        <begin position="1"/>
        <end position="1263"/>
    </location>
</feature>
<feature type="region of interest" description="Disordered" evidence="2">
    <location>
        <begin position="1"/>
        <end position="29"/>
    </location>
</feature>
<feature type="region of interest" description="Disordered" evidence="2">
    <location>
        <begin position="1098"/>
        <end position="1118"/>
    </location>
</feature>
<feature type="region of interest" description="Disordered" evidence="2">
    <location>
        <begin position="1225"/>
        <end position="1263"/>
    </location>
</feature>
<feature type="coiled-coil region" evidence="1">
    <location>
        <begin position="691"/>
        <end position="725"/>
    </location>
</feature>
<feature type="compositionally biased region" description="Polar residues" evidence="2">
    <location>
        <begin position="1"/>
        <end position="10"/>
    </location>
</feature>
<feature type="compositionally biased region" description="Polar residues" evidence="2">
    <location>
        <begin position="1106"/>
        <end position="1118"/>
    </location>
</feature>
<feature type="compositionally biased region" description="Basic residues" evidence="2">
    <location>
        <begin position="1230"/>
        <end position="1241"/>
    </location>
</feature>
<gene>
    <name evidence="17" type="primary">dpy-26</name>
    <name evidence="17" type="ORF">C25G4.5</name>
</gene>
<accession>G5EGE9</accession>
<dbReference type="EMBL" id="U43562">
    <property type="protein sequence ID" value="AAC47411.1"/>
    <property type="molecule type" value="mRNA"/>
</dbReference>
<dbReference type="EMBL" id="BX284604">
    <property type="protein sequence ID" value="CAA94575.1"/>
    <property type="molecule type" value="Genomic_DNA"/>
</dbReference>
<dbReference type="PIR" id="T19472">
    <property type="entry name" value="T19472"/>
</dbReference>
<dbReference type="RefSeq" id="NP_502378.1">
    <property type="nucleotide sequence ID" value="NM_069977.9"/>
</dbReference>
<dbReference type="SMR" id="G5EGE9"/>
<dbReference type="ComplexPortal" id="CPX-1271">
    <property type="entry name" value="Condensin I complex"/>
</dbReference>
<dbReference type="ComplexPortal" id="CPX-1273">
    <property type="entry name" value="Condensin I-like dosage compensation complex"/>
</dbReference>
<dbReference type="FunCoup" id="G5EGE9">
    <property type="interactions" value="1641"/>
</dbReference>
<dbReference type="IntAct" id="G5EGE9">
    <property type="interactions" value="5"/>
</dbReference>
<dbReference type="STRING" id="6239.C25G4.5.1"/>
<dbReference type="PaxDb" id="6239-C25G4.5"/>
<dbReference type="PeptideAtlas" id="G5EGE9"/>
<dbReference type="EnsemblMetazoa" id="C25G4.5.1">
    <property type="protein sequence ID" value="C25G4.5.1"/>
    <property type="gene ID" value="WBGene00001085"/>
</dbReference>
<dbReference type="GeneID" id="178196"/>
<dbReference type="KEGG" id="cel:CELE_C25G4.5"/>
<dbReference type="AGR" id="WB:WBGene00001085"/>
<dbReference type="CTD" id="178196"/>
<dbReference type="WormBase" id="C25G4.5">
    <property type="protein sequence ID" value="CE08398"/>
    <property type="gene ID" value="WBGene00001085"/>
    <property type="gene designation" value="dpy-26"/>
</dbReference>
<dbReference type="eggNOG" id="ENOG502TG5K">
    <property type="taxonomic scope" value="Eukaryota"/>
</dbReference>
<dbReference type="HOGENOM" id="CLU_007170_0_0_1"/>
<dbReference type="InParanoid" id="G5EGE9"/>
<dbReference type="OMA" id="IGRYKIM"/>
<dbReference type="OrthoDB" id="5790951at2759"/>
<dbReference type="PRO" id="PR:G5EGE9"/>
<dbReference type="Proteomes" id="UP000001940">
    <property type="component" value="Chromosome IV"/>
</dbReference>
<dbReference type="Bgee" id="WBGene00001085">
    <property type="expression patterns" value="Expressed in embryo and 4 other cell types or tissues"/>
</dbReference>
<dbReference type="GO" id="GO:0000794">
    <property type="term" value="C:condensed nuclear chromosome"/>
    <property type="evidence" value="ECO:0000314"/>
    <property type="project" value="WormBase"/>
</dbReference>
<dbReference type="GO" id="GO:0000796">
    <property type="term" value="C:condensin complex"/>
    <property type="evidence" value="ECO:0000353"/>
    <property type="project" value="ComplexPortal"/>
</dbReference>
<dbReference type="GO" id="GO:0046536">
    <property type="term" value="C:dosage compensation complex"/>
    <property type="evidence" value="ECO:0000353"/>
    <property type="project" value="WormBase"/>
</dbReference>
<dbReference type="GO" id="GO:0000228">
    <property type="term" value="C:nuclear chromosome"/>
    <property type="evidence" value="ECO:0000314"/>
    <property type="project" value="WormBase"/>
</dbReference>
<dbReference type="GO" id="GO:0000805">
    <property type="term" value="C:X chromosome"/>
    <property type="evidence" value="ECO:0000303"/>
    <property type="project" value="ComplexPortal"/>
</dbReference>
<dbReference type="GO" id="GO:0051301">
    <property type="term" value="P:cell division"/>
    <property type="evidence" value="ECO:0007669"/>
    <property type="project" value="UniProtKB-KW"/>
</dbReference>
<dbReference type="GO" id="GO:0030261">
    <property type="term" value="P:chromosome condensation"/>
    <property type="evidence" value="ECO:0007669"/>
    <property type="project" value="UniProtKB-KW"/>
</dbReference>
<dbReference type="GO" id="GO:0042464">
    <property type="term" value="P:dosage compensation by hypoactivation of X chromosome"/>
    <property type="evidence" value="ECO:0000315"/>
    <property type="project" value="WormBase"/>
</dbReference>
<dbReference type="GO" id="GO:0045132">
    <property type="term" value="P:meiotic chromosome segregation"/>
    <property type="evidence" value="ECO:0000315"/>
    <property type="project" value="WormBase"/>
</dbReference>
<dbReference type="GO" id="GO:0045144">
    <property type="term" value="P:meiotic sister chromatid segregation"/>
    <property type="evidence" value="ECO:0000315"/>
    <property type="project" value="WormBase"/>
</dbReference>
<dbReference type="GO" id="GO:0000070">
    <property type="term" value="P:mitotic sister chromatid segregation"/>
    <property type="evidence" value="ECO:0000315"/>
    <property type="project" value="WormBase"/>
</dbReference>
<dbReference type="GO" id="GO:0010629">
    <property type="term" value="P:negative regulation of gene expression"/>
    <property type="evidence" value="ECO:0000303"/>
    <property type="project" value="ComplexPortal"/>
</dbReference>
<organism evidence="16">
    <name type="scientific">Caenorhabditis elegans</name>
    <dbReference type="NCBI Taxonomy" id="6239"/>
    <lineage>
        <taxon>Eukaryota</taxon>
        <taxon>Metazoa</taxon>
        <taxon>Ecdysozoa</taxon>
        <taxon>Nematoda</taxon>
        <taxon>Chromadorea</taxon>
        <taxon>Rhabditida</taxon>
        <taxon>Rhabditina</taxon>
        <taxon>Rhabditomorpha</taxon>
        <taxon>Rhabditoidea</taxon>
        <taxon>Rhabditidae</taxon>
        <taxon>Peloderinae</taxon>
        <taxon>Caenorhabditis</taxon>
    </lineage>
</organism>
<comment type="function">
    <text evidence="3 5 6 7 8 10 11 12">Required for both chromosome condensation and segregation and for X-chromosome dosage compensation depending on its binding partners (PubMed:19119011, PubMed:19781752, PubMed:2917714, PubMed:8939869, PubMed:8939870). Member of the condensin I complex, a complex required for conversion of interphase chromatin into mitotic-like condense chromosomes and for proper chromosome segregation in mitosis and meiosis (PubMed:19119011, PubMed:19781752). As a member of the condensin I complex, further controls the crossover number and distribution in meiosis by restricting double strand break formation, probably by influencing higher-order chromosome structure (PubMed:18198337, PubMed:19781752). Plays a role in robust cytokinesis upon presence of chromatin obstructions (PubMed:23684975). Also a member of the condensin I-like dosage compensation complex that associates specifically with hermaphrodite X chromosomes to reduce their gene transcription during interphase, possibly through chromatin reorganization (PubMed:19119011, PubMed:19781752, PubMed:2917714, PubMed:8939870). As a member of the dosage compensation complex, also binds to regulatory regions of the autosomal her-1 gene, required for male development, possibly contributing to its repression in hermaphrodites (PubMed:11937488).</text>
</comment>
<comment type="subunit">
    <text evidence="4 5 6 7 9 12 13">Component of the condensin I complex, which contains the mix-1/SMC2 and smc-4/SMC4 heterodimer, and three non SMC subunits that probably regulate the complex: dpy-26, capg-1 and dpy-28 (PubMed:19119011, PubMed:19781752). Within the complex, interacts with dpy-28, mix-1, smc-4 and capg-1 (PubMed:15557118, PubMed:18198337, PubMed:19119011, PubMed:19781752, PubMed:28301465). Component of the dosage compensation complex, which consists of the condensin I-like components mix-1/SMC2 and dpy-27/SMC4, and the three non SMC subunits dpy-26, capg-1 and dpy-28 (PubMed:19119011, PubMed:19781752). Within the complex, interacts with dpy-27, dpy-28, mix-1 and capg-1 (PubMed:15557118, PubMed:18198337, PubMed:19119011, PubMed:19781752, PubMed:28301465, PubMed:8939870, PubMed:9458050). The interaction with dpy-27 is required for dpy-27 protein stability (PubMed:8939870). Interacts with smcl-1 (PubMed:28301465).</text>
</comment>
<comment type="subcellular location">
    <subcellularLocation>
        <location evidence="3 5 11">Nucleus</location>
    </subcellularLocation>
    <subcellularLocation>
        <location evidence="3 5 11">Chromosome</location>
    </subcellularLocation>
    <text evidence="5 11">During meiosis and mitosis, localizes to condensed chromosomes (PubMed:8939869). In interphase cells, diffusely distributed in nuclei of hermaphrodite embryos prior to the onset of dosage compensation (PubMed:8939869). Localizes to the X chromosome after the 40-cell stage when dosage compensation is initiated in hermaphrodite (XX) but not in male (X0) embryos, where it remains diffusely nuclear (PubMed:18198337, PubMed:8939869).</text>
</comment>
<comment type="tissue specificity">
    <text evidence="11">Expressed in embryos and in somatic and germline tissues in L4 stage larvae (at protein level).</text>
</comment>
<comment type="disruption phenotype">
    <text evidence="5 6 10 12">Results in larval lethality in XX hermaphrodites; survivors exhibit shorter and stouter body morphology and are egg-laying defective (PubMed:2917714). Male animals are viable (PubMed:2917714). Higher percentage of spontaneous males through X chromosome non-disjunction (PubMed:2917714). Disrupts protein stability of dpy-27 (PubMed:8939870). Disrupts localization of dpy-28 and of capg-1 to the hermaphrodite X-chromosome (PubMed:18198337, PubMed:19119011). RNAi-mediated knockdown results in chromosome segregation defects in mitosis and meiosis (PubMed:19119011). In a sex-1 mutant background, leads to high embryonic lethality (PubMed:19119011).</text>
</comment>
<protein>
    <recommendedName>
        <fullName evidence="14">Condensin complex subunit dpy-26</fullName>
    </recommendedName>
</protein>
<reference evidence="15" key="1">
    <citation type="journal article" date="1996" name="Science">
        <title>DPY-26, a link between dosage compensation and meiotic chromosome segregation in the nematode.</title>
        <authorList>
            <person name="Lieb J.D."/>
            <person name="Capowski E.E."/>
            <person name="Meneely P."/>
            <person name="Meyer B.J."/>
        </authorList>
    </citation>
    <scope>NUCLEOTIDE SEQUENCE [MRNA]</scope>
    <scope>FUNCTION</scope>
    <scope>SUBCELLULAR LOCATION</scope>
    <scope>TISSUE SPECIFICITY</scope>
    <source>
        <strain evidence="15">Bristol N2</strain>
    </source>
</reference>
<reference evidence="16" key="2">
    <citation type="journal article" date="1998" name="Science">
        <title>Genome sequence of the nematode C. elegans: a platform for investigating biology.</title>
        <authorList>
            <consortium name="The C. elegans sequencing consortium"/>
        </authorList>
    </citation>
    <scope>NUCLEOTIDE SEQUENCE [LARGE SCALE GENOMIC DNA]</scope>
    <source>
        <strain evidence="16">Bristol N2</strain>
    </source>
</reference>
<reference key="3">
    <citation type="journal article" date="1998" name="Cell">
        <title>MIX-1: an essential component of the C. elegans mitotic machinery executes X chromosome dosage compensation.</title>
        <authorList>
            <person name="Lieb J.D."/>
            <person name="Albrecht M.R."/>
            <person name="Chuang P.-T."/>
            <person name="Meyer B.J."/>
        </authorList>
    </citation>
    <scope>INTERACTION WITH MIX-1</scope>
</reference>
<reference key="4">
    <citation type="journal article" date="1989" name="Genetics">
        <title>Genes that implement the hermaphrodite mode of dosage compensation in Caenorhabditis elegans.</title>
        <authorList>
            <person name="Plenefisch J.D."/>
            <person name="DeLong L."/>
            <person name="Meyer B.J."/>
        </authorList>
    </citation>
    <scope>FUNCTION</scope>
    <scope>DISRUPTION PHENOTYPE</scope>
</reference>
<reference key="5">
    <citation type="journal article" date="1996" name="Science">
        <title>Sex-specific assembly of a dosage compensation complex on the nematode X chromosome.</title>
        <authorList>
            <person name="Chuang P.-T."/>
            <person name="Lieb J.D."/>
            <person name="Meyer B.J."/>
        </authorList>
    </citation>
    <scope>FUNCTION</scope>
    <scope>INTERACTION WITH DPY-27</scope>
    <scope>DISRUPTION PHENOTYPE</scope>
</reference>
<reference key="6">
    <citation type="journal article" date="2002" name="Genes Dev.">
        <title>A molecular link between gene-specific and chromosome-wide transcriptional repression.</title>
        <authorList>
            <person name="Chu D.S."/>
            <person name="Dawes H.E."/>
            <person name="Lieb J.D."/>
            <person name="Chan R.C."/>
            <person name="Kuo A.F."/>
            <person name="Meyer B.J."/>
        </authorList>
    </citation>
    <scope>FUNCTION</scope>
    <scope>SUBCELLULAR LOCATION</scope>
</reference>
<reference key="7">
    <citation type="journal article" date="2004" name="J. Cell Biol.">
        <title>Condensin restructures chromosomes in preparation for meiotic divisions.</title>
        <authorList>
            <person name="Chan R.C."/>
            <person name="Severson A.F."/>
            <person name="Meyer B.J."/>
        </authorList>
    </citation>
    <scope>INTERACTION WITH DPY-28 AND MIX-1</scope>
</reference>
<reference key="8">
    <citation type="journal article" date="2008" name="Genes Dev.">
        <title>Meiotic crossover number and distribution are regulated by a dosage compensation protein that resembles a condensin subunit.</title>
        <authorList>
            <person name="Tsai C.J."/>
            <person name="Mets D.G."/>
            <person name="Albrecht M.R."/>
            <person name="Nix P."/>
            <person name="Chan A."/>
            <person name="Meyer B.J."/>
        </authorList>
    </citation>
    <scope>FUNCTION</scope>
    <scope>INTERACTION WITH DPY-27; DPY;28 AND MIX-1</scope>
    <scope>SUBCELLULAR LOCATION</scope>
    <scope>DISRUPTION PHENOTYPE</scope>
</reference>
<reference key="9">
    <citation type="journal article" date="2009" name="Cell">
        <title>Condensins regulate meiotic DNA break distribution, thus crossover frequency, by controlling chromosome structure.</title>
        <authorList>
            <person name="Mets D.G."/>
            <person name="Meyer B.J."/>
        </authorList>
    </citation>
    <scope>FUNCTION</scope>
    <scope>IDENTIFICATION IN A CONDENSIN I COMPLEX AND IN A DOSAGE COMPENSATION COMPLEX</scope>
    <scope>INTERACTION WITH SMC-4; DPY-27; DPY-28; MIX-1 AND CAPG-1</scope>
</reference>
<reference key="10">
    <citation type="journal article" date="2009" name="Curr. Biol.">
        <title>Three distinct condensin complexes control C. elegans chromosome dynamics.</title>
        <authorList>
            <person name="Csankovszki G."/>
            <person name="Collette K."/>
            <person name="Spahl K."/>
            <person name="Carey J."/>
            <person name="Snyder M."/>
            <person name="Petty E."/>
            <person name="Patel U."/>
            <person name="Tabuchi T."/>
            <person name="Liu H."/>
            <person name="McLeod I."/>
            <person name="Thompson J."/>
            <person name="Sarkeshik A."/>
            <person name="Sarkesik A."/>
            <person name="Yates J."/>
            <person name="Meyer B.J."/>
            <person name="Hagstrom K."/>
        </authorList>
    </citation>
    <scope>FUNCTION</scope>
    <scope>IDENTIFICATION IN A CONDENSIN I COMPLEX AND IN A DOSAGE COMPENSATION COMPLEX</scope>
    <scope>INTERACTION WITH DPY-27; SMC-4; CAPG-1; MIX-1 AND DPY-28</scope>
    <scope>DISRUPTION PHENOTYPE</scope>
</reference>
<reference key="11">
    <citation type="journal article" date="2013" name="Curr. Biol.">
        <title>Condensin and the spindle midzone prevent cytokinesis failure induced by chromatin bridges in C. elegans embryos.</title>
        <authorList>
            <person name="Bembenek J.N."/>
            <person name="Verbrugghe K.J."/>
            <person name="Khanikar J."/>
            <person name="Csankovszki G."/>
            <person name="Chan R.C."/>
        </authorList>
    </citation>
    <scope>FUNCTION</scope>
</reference>
<reference key="12">
    <citation type="journal article" date="2017" name="PLoS Genet.">
        <title>An SMC-like protein binds and regulates Caenorhabditis elegans condensins.</title>
        <authorList>
            <person name="Chao L.F."/>
            <person name="Singh M."/>
            <person name="Thompson J."/>
            <person name="Yates J.R. III"/>
            <person name="Hagstrom K.A."/>
        </authorList>
    </citation>
    <scope>INTERACTION WITH SMCL-1; MIX-1; SMC-4; DPY-27; DPY-28 AND CAPG-1</scope>
    <scope>IDENTIFICATION BY MASS SPECTROMETRY</scope>
</reference>
<name>DPY26_CAEEL</name>